<proteinExistence type="inferred from homology"/>
<name>THII_BACC7</name>
<comment type="function">
    <text evidence="1">Catalyzes the ATP-dependent transfer of a sulfur to tRNA to produce 4-thiouridine in position 8 of tRNAs, which functions as a near-UV photosensor. Also catalyzes the transfer of sulfur to the sulfur carrier protein ThiS, forming ThiS-thiocarboxylate. This is a step in the synthesis of thiazole, in the thiamine biosynthesis pathway. The sulfur is donated as persulfide by IscS.</text>
</comment>
<comment type="catalytic activity">
    <reaction evidence="1">
        <text>[ThiI sulfur-carrier protein]-S-sulfanyl-L-cysteine + a uridine in tRNA + 2 reduced [2Fe-2S]-[ferredoxin] + ATP + H(+) = [ThiI sulfur-carrier protein]-L-cysteine + a 4-thiouridine in tRNA + 2 oxidized [2Fe-2S]-[ferredoxin] + AMP + diphosphate</text>
        <dbReference type="Rhea" id="RHEA:24176"/>
        <dbReference type="Rhea" id="RHEA-COMP:10000"/>
        <dbReference type="Rhea" id="RHEA-COMP:10001"/>
        <dbReference type="Rhea" id="RHEA-COMP:13337"/>
        <dbReference type="Rhea" id="RHEA-COMP:13338"/>
        <dbReference type="Rhea" id="RHEA-COMP:13339"/>
        <dbReference type="Rhea" id="RHEA-COMP:13340"/>
        <dbReference type="ChEBI" id="CHEBI:15378"/>
        <dbReference type="ChEBI" id="CHEBI:29950"/>
        <dbReference type="ChEBI" id="CHEBI:30616"/>
        <dbReference type="ChEBI" id="CHEBI:33019"/>
        <dbReference type="ChEBI" id="CHEBI:33737"/>
        <dbReference type="ChEBI" id="CHEBI:33738"/>
        <dbReference type="ChEBI" id="CHEBI:61963"/>
        <dbReference type="ChEBI" id="CHEBI:65315"/>
        <dbReference type="ChEBI" id="CHEBI:136798"/>
        <dbReference type="ChEBI" id="CHEBI:456215"/>
        <dbReference type="EC" id="2.8.1.4"/>
    </reaction>
</comment>
<comment type="catalytic activity">
    <reaction evidence="1">
        <text>[ThiS sulfur-carrier protein]-C-terminal Gly-Gly-AMP + S-sulfanyl-L-cysteinyl-[cysteine desulfurase] + AH2 = [ThiS sulfur-carrier protein]-C-terminal-Gly-aminoethanethioate + L-cysteinyl-[cysteine desulfurase] + A + AMP + 2 H(+)</text>
        <dbReference type="Rhea" id="RHEA:43340"/>
        <dbReference type="Rhea" id="RHEA-COMP:12157"/>
        <dbReference type="Rhea" id="RHEA-COMP:12158"/>
        <dbReference type="Rhea" id="RHEA-COMP:12910"/>
        <dbReference type="Rhea" id="RHEA-COMP:19908"/>
        <dbReference type="ChEBI" id="CHEBI:13193"/>
        <dbReference type="ChEBI" id="CHEBI:15378"/>
        <dbReference type="ChEBI" id="CHEBI:17499"/>
        <dbReference type="ChEBI" id="CHEBI:29950"/>
        <dbReference type="ChEBI" id="CHEBI:61963"/>
        <dbReference type="ChEBI" id="CHEBI:90618"/>
        <dbReference type="ChEBI" id="CHEBI:232372"/>
        <dbReference type="ChEBI" id="CHEBI:456215"/>
    </reaction>
</comment>
<comment type="pathway">
    <text evidence="1">Cofactor biosynthesis; thiamine diphosphate biosynthesis.</text>
</comment>
<comment type="subcellular location">
    <subcellularLocation>
        <location evidence="1">Cytoplasm</location>
    </subcellularLocation>
</comment>
<comment type="similarity">
    <text evidence="1">Belongs to the ThiI family.</text>
</comment>
<sequence>MMTYEYILVRYGEMTTKGKNRSKFVSTLKDNVKFKLKKFPNIKIDATHDRMYIQLNGEDHEAVSERLKDVFGIHKFNLAMKVPSELEDIKKGALAAFLQVKGDVKTFKITVHRSYKHFPMRTMELLPEIGGHILENTEDITVDVHNPDVNVRVEIRSGYSYIMCDERMGAGGLPVGVGGKVMVLLSGGIDSPVAAYLTMKRGVSVEAVHFHSPPFTSERAKQKVIDLAQELTKYCKRVTLHLVPFTEVQKTINKEIPSSYSMTVMRRMMMRITERIAEERNALAITTGESLGQVASQTLDSMHTINEVTNYPIIRPLITMDKLEIIKIAEEIGTYDISIRPYEDCCTVFTPASPATKPKREKANRFEAKYDFTPLIDEAVANKETMVLQTVEVVAEEEKFEELF</sequence>
<organism>
    <name type="scientific">Bacillus cereus (strain AH187)</name>
    <dbReference type="NCBI Taxonomy" id="405534"/>
    <lineage>
        <taxon>Bacteria</taxon>
        <taxon>Bacillati</taxon>
        <taxon>Bacillota</taxon>
        <taxon>Bacilli</taxon>
        <taxon>Bacillales</taxon>
        <taxon>Bacillaceae</taxon>
        <taxon>Bacillus</taxon>
        <taxon>Bacillus cereus group</taxon>
    </lineage>
</organism>
<accession>B7HSI4</accession>
<protein>
    <recommendedName>
        <fullName evidence="1">Probable tRNA sulfurtransferase</fullName>
        <ecNumber evidence="1">2.8.1.4</ecNumber>
    </recommendedName>
    <alternativeName>
        <fullName evidence="1">Sulfur carrier protein ThiS sulfurtransferase</fullName>
    </alternativeName>
    <alternativeName>
        <fullName evidence="1">Thiamine biosynthesis protein ThiI</fullName>
    </alternativeName>
    <alternativeName>
        <fullName evidence="1">tRNA 4-thiouridine synthase</fullName>
    </alternativeName>
</protein>
<evidence type="ECO:0000255" key="1">
    <source>
        <dbReference type="HAMAP-Rule" id="MF_00021"/>
    </source>
</evidence>
<reference key="1">
    <citation type="submission" date="2008-10" db="EMBL/GenBank/DDBJ databases">
        <title>Genome sequence of Bacillus cereus AH187.</title>
        <authorList>
            <person name="Dodson R.J."/>
            <person name="Durkin A.S."/>
            <person name="Rosovitz M.J."/>
            <person name="Rasko D.A."/>
            <person name="Kolsto A.B."/>
            <person name="Okstad O.A."/>
            <person name="Ravel J."/>
            <person name="Sutton G."/>
        </authorList>
    </citation>
    <scope>NUCLEOTIDE SEQUENCE [LARGE SCALE GENOMIC DNA]</scope>
    <source>
        <strain>AH187</strain>
    </source>
</reference>
<gene>
    <name evidence="1" type="primary">thiI</name>
    <name type="ordered locus">BCAH187_A4782</name>
</gene>
<dbReference type="EC" id="2.8.1.4" evidence="1"/>
<dbReference type="EMBL" id="CP001177">
    <property type="protein sequence ID" value="ACJ80428.1"/>
    <property type="molecule type" value="Genomic_DNA"/>
</dbReference>
<dbReference type="SMR" id="B7HSI4"/>
<dbReference type="KEGG" id="bcr:BCAH187_A4782"/>
<dbReference type="HOGENOM" id="CLU_037952_4_0_9"/>
<dbReference type="UniPathway" id="UPA00060"/>
<dbReference type="Proteomes" id="UP000002214">
    <property type="component" value="Chromosome"/>
</dbReference>
<dbReference type="GO" id="GO:0005829">
    <property type="term" value="C:cytosol"/>
    <property type="evidence" value="ECO:0007669"/>
    <property type="project" value="TreeGrafter"/>
</dbReference>
<dbReference type="GO" id="GO:0005524">
    <property type="term" value="F:ATP binding"/>
    <property type="evidence" value="ECO:0007669"/>
    <property type="project" value="UniProtKB-UniRule"/>
</dbReference>
<dbReference type="GO" id="GO:0004810">
    <property type="term" value="F:CCA tRNA nucleotidyltransferase activity"/>
    <property type="evidence" value="ECO:0007669"/>
    <property type="project" value="InterPro"/>
</dbReference>
<dbReference type="GO" id="GO:0000049">
    <property type="term" value="F:tRNA binding"/>
    <property type="evidence" value="ECO:0007669"/>
    <property type="project" value="UniProtKB-UniRule"/>
</dbReference>
<dbReference type="GO" id="GO:0140741">
    <property type="term" value="F:tRNA-uracil-4 sulfurtransferase activity"/>
    <property type="evidence" value="ECO:0007669"/>
    <property type="project" value="UniProtKB-EC"/>
</dbReference>
<dbReference type="GO" id="GO:0009228">
    <property type="term" value="P:thiamine biosynthetic process"/>
    <property type="evidence" value="ECO:0007669"/>
    <property type="project" value="UniProtKB-KW"/>
</dbReference>
<dbReference type="GO" id="GO:0009229">
    <property type="term" value="P:thiamine diphosphate biosynthetic process"/>
    <property type="evidence" value="ECO:0007669"/>
    <property type="project" value="UniProtKB-UniRule"/>
</dbReference>
<dbReference type="GO" id="GO:0052837">
    <property type="term" value="P:thiazole biosynthetic process"/>
    <property type="evidence" value="ECO:0007669"/>
    <property type="project" value="TreeGrafter"/>
</dbReference>
<dbReference type="GO" id="GO:0002937">
    <property type="term" value="P:tRNA 4-thiouridine biosynthesis"/>
    <property type="evidence" value="ECO:0007669"/>
    <property type="project" value="TreeGrafter"/>
</dbReference>
<dbReference type="CDD" id="cd01712">
    <property type="entry name" value="PPase_ThiI"/>
    <property type="match status" value="1"/>
</dbReference>
<dbReference type="CDD" id="cd11716">
    <property type="entry name" value="THUMP_ThiI"/>
    <property type="match status" value="1"/>
</dbReference>
<dbReference type="FunFam" id="3.30.2130.30:FF:000003">
    <property type="entry name" value="Probable tRNA sulfurtransferase"/>
    <property type="match status" value="1"/>
</dbReference>
<dbReference type="FunFam" id="3.40.50.620:FF:000053">
    <property type="entry name" value="Probable tRNA sulfurtransferase"/>
    <property type="match status" value="1"/>
</dbReference>
<dbReference type="Gene3D" id="3.30.2130.30">
    <property type="match status" value="1"/>
</dbReference>
<dbReference type="Gene3D" id="3.40.50.620">
    <property type="entry name" value="HUPs"/>
    <property type="match status" value="1"/>
</dbReference>
<dbReference type="HAMAP" id="MF_00021">
    <property type="entry name" value="ThiI"/>
    <property type="match status" value="1"/>
</dbReference>
<dbReference type="InterPro" id="IPR014729">
    <property type="entry name" value="Rossmann-like_a/b/a_fold"/>
</dbReference>
<dbReference type="InterPro" id="IPR020536">
    <property type="entry name" value="ThiI_AANH"/>
</dbReference>
<dbReference type="InterPro" id="IPR054173">
    <property type="entry name" value="ThiI_fer"/>
</dbReference>
<dbReference type="InterPro" id="IPR049961">
    <property type="entry name" value="ThiI_N"/>
</dbReference>
<dbReference type="InterPro" id="IPR004114">
    <property type="entry name" value="THUMP_dom"/>
</dbReference>
<dbReference type="InterPro" id="IPR049962">
    <property type="entry name" value="THUMP_ThiI"/>
</dbReference>
<dbReference type="InterPro" id="IPR003720">
    <property type="entry name" value="tRNA_STrfase"/>
</dbReference>
<dbReference type="InterPro" id="IPR050102">
    <property type="entry name" value="tRNA_sulfurtransferase_ThiI"/>
</dbReference>
<dbReference type="NCBIfam" id="TIGR00342">
    <property type="entry name" value="tRNA uracil 4-sulfurtransferase ThiI"/>
    <property type="match status" value="1"/>
</dbReference>
<dbReference type="PANTHER" id="PTHR43209">
    <property type="entry name" value="TRNA SULFURTRANSFERASE"/>
    <property type="match status" value="1"/>
</dbReference>
<dbReference type="PANTHER" id="PTHR43209:SF1">
    <property type="entry name" value="TRNA SULFURTRANSFERASE"/>
    <property type="match status" value="1"/>
</dbReference>
<dbReference type="Pfam" id="PF02568">
    <property type="entry name" value="ThiI"/>
    <property type="match status" value="1"/>
</dbReference>
<dbReference type="Pfam" id="PF22025">
    <property type="entry name" value="ThiI_fer"/>
    <property type="match status" value="1"/>
</dbReference>
<dbReference type="Pfam" id="PF02926">
    <property type="entry name" value="THUMP"/>
    <property type="match status" value="1"/>
</dbReference>
<dbReference type="SMART" id="SM00981">
    <property type="entry name" value="THUMP"/>
    <property type="match status" value="1"/>
</dbReference>
<dbReference type="SUPFAM" id="SSF52402">
    <property type="entry name" value="Adenine nucleotide alpha hydrolases-like"/>
    <property type="match status" value="1"/>
</dbReference>
<dbReference type="SUPFAM" id="SSF143437">
    <property type="entry name" value="THUMP domain-like"/>
    <property type="match status" value="1"/>
</dbReference>
<dbReference type="PROSITE" id="PS51165">
    <property type="entry name" value="THUMP"/>
    <property type="match status" value="1"/>
</dbReference>
<keyword id="KW-0067">ATP-binding</keyword>
<keyword id="KW-0963">Cytoplasm</keyword>
<keyword id="KW-0547">Nucleotide-binding</keyword>
<keyword id="KW-0694">RNA-binding</keyword>
<keyword id="KW-0784">Thiamine biosynthesis</keyword>
<keyword id="KW-0808">Transferase</keyword>
<keyword id="KW-0820">tRNA-binding</keyword>
<feature type="chain" id="PRO_1000116398" description="Probable tRNA sulfurtransferase">
    <location>
        <begin position="1"/>
        <end position="404"/>
    </location>
</feature>
<feature type="domain" description="THUMP" evidence="1">
    <location>
        <begin position="61"/>
        <end position="166"/>
    </location>
</feature>
<feature type="binding site" evidence="1">
    <location>
        <begin position="184"/>
        <end position="185"/>
    </location>
    <ligand>
        <name>ATP</name>
        <dbReference type="ChEBI" id="CHEBI:30616"/>
    </ligand>
</feature>
<feature type="binding site" evidence="1">
    <location>
        <begin position="209"/>
        <end position="210"/>
    </location>
    <ligand>
        <name>ATP</name>
        <dbReference type="ChEBI" id="CHEBI:30616"/>
    </ligand>
</feature>
<feature type="binding site" evidence="1">
    <location>
        <position position="266"/>
    </location>
    <ligand>
        <name>ATP</name>
        <dbReference type="ChEBI" id="CHEBI:30616"/>
    </ligand>
</feature>
<feature type="binding site" evidence="1">
    <location>
        <position position="288"/>
    </location>
    <ligand>
        <name>ATP</name>
        <dbReference type="ChEBI" id="CHEBI:30616"/>
    </ligand>
</feature>
<feature type="binding site" evidence="1">
    <location>
        <position position="297"/>
    </location>
    <ligand>
        <name>ATP</name>
        <dbReference type="ChEBI" id="CHEBI:30616"/>
    </ligand>
</feature>